<proteinExistence type="inferred from homology"/>
<accession>B2K814</accession>
<protein>
    <recommendedName>
        <fullName evidence="1">NADH-quinone oxidoreductase subunit I</fullName>
        <ecNumber evidence="1">7.1.1.-</ecNumber>
    </recommendedName>
    <alternativeName>
        <fullName evidence="1">NADH dehydrogenase I subunit I</fullName>
    </alternativeName>
    <alternativeName>
        <fullName evidence="1">NDH-1 subunit I</fullName>
    </alternativeName>
</protein>
<feature type="chain" id="PRO_1000166643" description="NADH-quinone oxidoreductase subunit I">
    <location>
        <begin position="1"/>
        <end position="180"/>
    </location>
</feature>
<feature type="domain" description="4Fe-4S ferredoxin-type 1" evidence="1">
    <location>
        <begin position="50"/>
        <end position="80"/>
    </location>
</feature>
<feature type="domain" description="4Fe-4S ferredoxin-type 2" evidence="1">
    <location>
        <begin position="90"/>
        <end position="119"/>
    </location>
</feature>
<feature type="binding site" evidence="1">
    <location>
        <position position="60"/>
    </location>
    <ligand>
        <name>[4Fe-4S] cluster</name>
        <dbReference type="ChEBI" id="CHEBI:49883"/>
        <label>1</label>
    </ligand>
</feature>
<feature type="binding site" evidence="1">
    <location>
        <position position="63"/>
    </location>
    <ligand>
        <name>[4Fe-4S] cluster</name>
        <dbReference type="ChEBI" id="CHEBI:49883"/>
        <label>1</label>
    </ligand>
</feature>
<feature type="binding site" evidence="1">
    <location>
        <position position="66"/>
    </location>
    <ligand>
        <name>[4Fe-4S] cluster</name>
        <dbReference type="ChEBI" id="CHEBI:49883"/>
        <label>1</label>
    </ligand>
</feature>
<feature type="binding site" evidence="1">
    <location>
        <position position="70"/>
    </location>
    <ligand>
        <name>[4Fe-4S] cluster</name>
        <dbReference type="ChEBI" id="CHEBI:49883"/>
        <label>2</label>
    </ligand>
</feature>
<feature type="binding site" evidence="1">
    <location>
        <position position="99"/>
    </location>
    <ligand>
        <name>[4Fe-4S] cluster</name>
        <dbReference type="ChEBI" id="CHEBI:49883"/>
        <label>2</label>
    </ligand>
</feature>
<feature type="binding site" evidence="1">
    <location>
        <position position="102"/>
    </location>
    <ligand>
        <name>[4Fe-4S] cluster</name>
        <dbReference type="ChEBI" id="CHEBI:49883"/>
        <label>2</label>
    </ligand>
</feature>
<feature type="binding site" evidence="1">
    <location>
        <position position="105"/>
    </location>
    <ligand>
        <name>[4Fe-4S] cluster</name>
        <dbReference type="ChEBI" id="CHEBI:49883"/>
        <label>2</label>
    </ligand>
</feature>
<feature type="binding site" evidence="1">
    <location>
        <position position="109"/>
    </location>
    <ligand>
        <name>[4Fe-4S] cluster</name>
        <dbReference type="ChEBI" id="CHEBI:49883"/>
        <label>1</label>
    </ligand>
</feature>
<name>NUOI_YERPB</name>
<reference key="1">
    <citation type="submission" date="2008-04" db="EMBL/GenBank/DDBJ databases">
        <title>Complete sequence of Yersinia pseudotuberculosis PB1/+.</title>
        <authorList>
            <person name="Copeland A."/>
            <person name="Lucas S."/>
            <person name="Lapidus A."/>
            <person name="Glavina del Rio T."/>
            <person name="Dalin E."/>
            <person name="Tice H."/>
            <person name="Bruce D."/>
            <person name="Goodwin L."/>
            <person name="Pitluck S."/>
            <person name="Munk A.C."/>
            <person name="Brettin T."/>
            <person name="Detter J.C."/>
            <person name="Han C."/>
            <person name="Tapia R."/>
            <person name="Schmutz J."/>
            <person name="Larimer F."/>
            <person name="Land M."/>
            <person name="Hauser L."/>
            <person name="Challacombe J.F."/>
            <person name="Green L."/>
            <person name="Lindler L.E."/>
            <person name="Nikolich M.P."/>
            <person name="Richardson P."/>
        </authorList>
    </citation>
    <scope>NUCLEOTIDE SEQUENCE [LARGE SCALE GENOMIC DNA]</scope>
    <source>
        <strain>PB1/+</strain>
    </source>
</reference>
<gene>
    <name evidence="1" type="primary">nuoI</name>
    <name type="ordered locus">YPTS_2675</name>
</gene>
<organism>
    <name type="scientific">Yersinia pseudotuberculosis serotype IB (strain PB1/+)</name>
    <dbReference type="NCBI Taxonomy" id="502801"/>
    <lineage>
        <taxon>Bacteria</taxon>
        <taxon>Pseudomonadati</taxon>
        <taxon>Pseudomonadota</taxon>
        <taxon>Gammaproteobacteria</taxon>
        <taxon>Enterobacterales</taxon>
        <taxon>Yersiniaceae</taxon>
        <taxon>Yersinia</taxon>
    </lineage>
</organism>
<dbReference type="EC" id="7.1.1.-" evidence="1"/>
<dbReference type="EMBL" id="CP001048">
    <property type="protein sequence ID" value="ACC89635.1"/>
    <property type="molecule type" value="Genomic_DNA"/>
</dbReference>
<dbReference type="RefSeq" id="WP_002210273.1">
    <property type="nucleotide sequence ID" value="NZ_CP009780.1"/>
</dbReference>
<dbReference type="SMR" id="B2K814"/>
<dbReference type="GeneID" id="96666079"/>
<dbReference type="KEGG" id="ypb:YPTS_2675"/>
<dbReference type="PATRIC" id="fig|502801.10.peg.2094"/>
<dbReference type="GO" id="GO:0005886">
    <property type="term" value="C:plasma membrane"/>
    <property type="evidence" value="ECO:0007669"/>
    <property type="project" value="UniProtKB-SubCell"/>
</dbReference>
<dbReference type="GO" id="GO:0051539">
    <property type="term" value="F:4 iron, 4 sulfur cluster binding"/>
    <property type="evidence" value="ECO:0007669"/>
    <property type="project" value="UniProtKB-KW"/>
</dbReference>
<dbReference type="GO" id="GO:0005506">
    <property type="term" value="F:iron ion binding"/>
    <property type="evidence" value="ECO:0007669"/>
    <property type="project" value="UniProtKB-UniRule"/>
</dbReference>
<dbReference type="GO" id="GO:0050136">
    <property type="term" value="F:NADH:ubiquinone reductase (non-electrogenic) activity"/>
    <property type="evidence" value="ECO:0007669"/>
    <property type="project" value="UniProtKB-UniRule"/>
</dbReference>
<dbReference type="GO" id="GO:0048038">
    <property type="term" value="F:quinone binding"/>
    <property type="evidence" value="ECO:0007669"/>
    <property type="project" value="UniProtKB-KW"/>
</dbReference>
<dbReference type="GO" id="GO:0009060">
    <property type="term" value="P:aerobic respiration"/>
    <property type="evidence" value="ECO:0007669"/>
    <property type="project" value="TreeGrafter"/>
</dbReference>
<dbReference type="FunFam" id="3.30.70.3270:FF:000002">
    <property type="entry name" value="NADH-quinone oxidoreductase subunit I"/>
    <property type="match status" value="1"/>
</dbReference>
<dbReference type="Gene3D" id="3.30.70.3270">
    <property type="match status" value="1"/>
</dbReference>
<dbReference type="HAMAP" id="MF_01351">
    <property type="entry name" value="NDH1_NuoI"/>
    <property type="match status" value="1"/>
</dbReference>
<dbReference type="InterPro" id="IPR017896">
    <property type="entry name" value="4Fe4S_Fe-S-bd"/>
</dbReference>
<dbReference type="InterPro" id="IPR017900">
    <property type="entry name" value="4Fe4S_Fe_S_CS"/>
</dbReference>
<dbReference type="InterPro" id="IPR010226">
    <property type="entry name" value="NADH_quinone_OxRdtase_chainI"/>
</dbReference>
<dbReference type="NCBIfam" id="TIGR01971">
    <property type="entry name" value="NuoI"/>
    <property type="match status" value="1"/>
</dbReference>
<dbReference type="NCBIfam" id="NF004536">
    <property type="entry name" value="PRK05888.1-1"/>
    <property type="match status" value="1"/>
</dbReference>
<dbReference type="PANTHER" id="PTHR10849:SF20">
    <property type="entry name" value="NADH DEHYDROGENASE [UBIQUINONE] IRON-SULFUR PROTEIN 8, MITOCHONDRIAL"/>
    <property type="match status" value="1"/>
</dbReference>
<dbReference type="PANTHER" id="PTHR10849">
    <property type="entry name" value="NADH DEHYDROGENASE UBIQUINONE IRON-SULFUR PROTEIN 8, MITOCHONDRIAL"/>
    <property type="match status" value="1"/>
</dbReference>
<dbReference type="Pfam" id="PF12838">
    <property type="entry name" value="Fer4_7"/>
    <property type="match status" value="1"/>
</dbReference>
<dbReference type="SUPFAM" id="SSF54862">
    <property type="entry name" value="4Fe-4S ferredoxins"/>
    <property type="match status" value="1"/>
</dbReference>
<dbReference type="PROSITE" id="PS00198">
    <property type="entry name" value="4FE4S_FER_1"/>
    <property type="match status" value="2"/>
</dbReference>
<dbReference type="PROSITE" id="PS51379">
    <property type="entry name" value="4FE4S_FER_2"/>
    <property type="match status" value="2"/>
</dbReference>
<comment type="function">
    <text evidence="1">NDH-1 shuttles electrons from NADH, via FMN and iron-sulfur (Fe-S) centers, to quinones in the respiratory chain. The immediate electron acceptor for the enzyme in this species is believed to be ubiquinone. Couples the redox reaction to proton translocation (for every two electrons transferred, four hydrogen ions are translocated across the cytoplasmic membrane), and thus conserves the redox energy in a proton gradient.</text>
</comment>
<comment type="catalytic activity">
    <reaction evidence="1">
        <text>a quinone + NADH + 5 H(+)(in) = a quinol + NAD(+) + 4 H(+)(out)</text>
        <dbReference type="Rhea" id="RHEA:57888"/>
        <dbReference type="ChEBI" id="CHEBI:15378"/>
        <dbReference type="ChEBI" id="CHEBI:24646"/>
        <dbReference type="ChEBI" id="CHEBI:57540"/>
        <dbReference type="ChEBI" id="CHEBI:57945"/>
        <dbReference type="ChEBI" id="CHEBI:132124"/>
    </reaction>
</comment>
<comment type="cofactor">
    <cofactor evidence="1">
        <name>[4Fe-4S] cluster</name>
        <dbReference type="ChEBI" id="CHEBI:49883"/>
    </cofactor>
    <text evidence="1">Binds 2 [4Fe-4S] clusters per subunit.</text>
</comment>
<comment type="subunit">
    <text evidence="1">NDH-1 is composed of 13 different subunits. Subunits NuoA, H, J, K, L, M, N constitute the membrane sector of the complex.</text>
</comment>
<comment type="subcellular location">
    <subcellularLocation>
        <location evidence="1">Cell inner membrane</location>
        <topology evidence="1">Peripheral membrane protein</topology>
    </subcellularLocation>
</comment>
<comment type="similarity">
    <text evidence="1">Belongs to the complex I 23 kDa subunit family.</text>
</comment>
<keyword id="KW-0004">4Fe-4S</keyword>
<keyword id="KW-0997">Cell inner membrane</keyword>
<keyword id="KW-1003">Cell membrane</keyword>
<keyword id="KW-0408">Iron</keyword>
<keyword id="KW-0411">Iron-sulfur</keyword>
<keyword id="KW-0472">Membrane</keyword>
<keyword id="KW-0479">Metal-binding</keyword>
<keyword id="KW-0520">NAD</keyword>
<keyword id="KW-0874">Quinone</keyword>
<keyword id="KW-0677">Repeat</keyword>
<keyword id="KW-1278">Translocase</keyword>
<keyword id="KW-0830">Ubiquinone</keyword>
<evidence type="ECO:0000255" key="1">
    <source>
        <dbReference type="HAMAP-Rule" id="MF_01351"/>
    </source>
</evidence>
<sequence length="180" mass="20559">MTLKELVVGFGTQVRSLWMIGLHAFHKRETLMYPEEPVYLPPRYRGRIVLTRDPDGEERCVACNLCAVACPVGCISLQKAEQKDGRWYPEFFRINFSRCIFCGLCEEACPTTAIQLTPDFEMGEFKRQDLVYEKEDLLISGPGKYPEYNFYRMAGMAIDGKQKGEAENEAKPIDVKGLMP</sequence>